<gene>
    <name evidence="1" type="primary">pyrI</name>
    <name type="ordered locus">TGAM_2089</name>
</gene>
<organism>
    <name type="scientific">Thermococcus gammatolerans (strain DSM 15229 / JCM 11827 / EJ3)</name>
    <dbReference type="NCBI Taxonomy" id="593117"/>
    <lineage>
        <taxon>Archaea</taxon>
        <taxon>Methanobacteriati</taxon>
        <taxon>Methanobacteriota</taxon>
        <taxon>Thermococci</taxon>
        <taxon>Thermococcales</taxon>
        <taxon>Thermococcaceae</taxon>
        <taxon>Thermococcus</taxon>
    </lineage>
</organism>
<evidence type="ECO:0000255" key="1">
    <source>
        <dbReference type="HAMAP-Rule" id="MF_00002"/>
    </source>
</evidence>
<proteinExistence type="inferred from homology"/>
<protein>
    <recommendedName>
        <fullName evidence="1">Aspartate carbamoyltransferase regulatory chain</fullName>
    </recommendedName>
</protein>
<keyword id="KW-0479">Metal-binding</keyword>
<keyword id="KW-0665">Pyrimidine biosynthesis</keyword>
<keyword id="KW-1185">Reference proteome</keyword>
<keyword id="KW-0862">Zinc</keyword>
<name>PYRI_THEGJ</name>
<feature type="chain" id="PRO_1000201620" description="Aspartate carbamoyltransferase regulatory chain">
    <location>
        <begin position="1"/>
        <end position="151"/>
    </location>
</feature>
<feature type="binding site" evidence="1">
    <location>
        <position position="107"/>
    </location>
    <ligand>
        <name>Zn(2+)</name>
        <dbReference type="ChEBI" id="CHEBI:29105"/>
    </ligand>
</feature>
<feature type="binding site" evidence="1">
    <location>
        <position position="112"/>
    </location>
    <ligand>
        <name>Zn(2+)</name>
        <dbReference type="ChEBI" id="CHEBI:29105"/>
    </ligand>
</feature>
<feature type="binding site" evidence="1">
    <location>
        <position position="135"/>
    </location>
    <ligand>
        <name>Zn(2+)</name>
        <dbReference type="ChEBI" id="CHEBI:29105"/>
    </ligand>
</feature>
<feature type="binding site" evidence="1">
    <location>
        <position position="138"/>
    </location>
    <ligand>
        <name>Zn(2+)</name>
        <dbReference type="ChEBI" id="CHEBI:29105"/>
    </ligand>
</feature>
<reference key="1">
    <citation type="journal article" date="2007" name="Genome Biol.">
        <title>Genome analysis and genome-wide proteomics of Thermococcus gammatolerans, the most radioresistant organism known amongst the Archaea.</title>
        <authorList>
            <person name="Zivanovic Y."/>
            <person name="Armengaud J."/>
            <person name="Lagorce A."/>
            <person name="Leplat C."/>
            <person name="Guerin P."/>
            <person name="Dutertre M."/>
            <person name="Anthouard V."/>
            <person name="Forterre P."/>
            <person name="Wincker P."/>
            <person name="Confalonieri F."/>
        </authorList>
    </citation>
    <scope>NUCLEOTIDE SEQUENCE [LARGE SCALE GENOMIC DNA]</scope>
    <source>
        <strain>DSM 15229 / JCM 11827 / EJ3</strain>
    </source>
</reference>
<comment type="function">
    <text evidence="1">Involved in allosteric regulation of aspartate carbamoyltransferase.</text>
</comment>
<comment type="cofactor">
    <cofactor evidence="1">
        <name>Zn(2+)</name>
        <dbReference type="ChEBI" id="CHEBI:29105"/>
    </cofactor>
    <text evidence="1">Binds 1 zinc ion per subunit.</text>
</comment>
<comment type="subunit">
    <text evidence="1">Contains catalytic and regulatory chains.</text>
</comment>
<comment type="similarity">
    <text evidence="1">Belongs to the PyrI family.</text>
</comment>
<dbReference type="EMBL" id="CP001398">
    <property type="protein sequence ID" value="ACS34591.1"/>
    <property type="molecule type" value="Genomic_DNA"/>
</dbReference>
<dbReference type="RefSeq" id="WP_015859694.1">
    <property type="nucleotide sequence ID" value="NC_012804.1"/>
</dbReference>
<dbReference type="SMR" id="C5A2H2"/>
<dbReference type="STRING" id="593117.TGAM_2089"/>
<dbReference type="PaxDb" id="593117-TGAM_2089"/>
<dbReference type="GeneID" id="7988655"/>
<dbReference type="KEGG" id="tga:TGAM_2089"/>
<dbReference type="PATRIC" id="fig|593117.10.peg.2097"/>
<dbReference type="eggNOG" id="arCOG04229">
    <property type="taxonomic scope" value="Archaea"/>
</dbReference>
<dbReference type="HOGENOM" id="CLU_128576_0_0_2"/>
<dbReference type="OrthoDB" id="7000at2157"/>
<dbReference type="Proteomes" id="UP000001488">
    <property type="component" value="Chromosome"/>
</dbReference>
<dbReference type="GO" id="GO:0009347">
    <property type="term" value="C:aspartate carbamoyltransferase complex"/>
    <property type="evidence" value="ECO:0007669"/>
    <property type="project" value="InterPro"/>
</dbReference>
<dbReference type="GO" id="GO:0046872">
    <property type="term" value="F:metal ion binding"/>
    <property type="evidence" value="ECO:0007669"/>
    <property type="project" value="UniProtKB-KW"/>
</dbReference>
<dbReference type="GO" id="GO:0006207">
    <property type="term" value="P:'de novo' pyrimidine nucleobase biosynthetic process"/>
    <property type="evidence" value="ECO:0007669"/>
    <property type="project" value="InterPro"/>
</dbReference>
<dbReference type="GO" id="GO:0006221">
    <property type="term" value="P:pyrimidine nucleotide biosynthetic process"/>
    <property type="evidence" value="ECO:0007669"/>
    <property type="project" value="UniProtKB-UniRule"/>
</dbReference>
<dbReference type="Gene3D" id="2.30.30.20">
    <property type="entry name" value="Aspartate carbamoyltransferase regulatory subunit, C-terminal domain"/>
    <property type="match status" value="1"/>
</dbReference>
<dbReference type="Gene3D" id="3.30.70.140">
    <property type="entry name" value="Aspartate carbamoyltransferase regulatory subunit, N-terminal domain"/>
    <property type="match status" value="1"/>
</dbReference>
<dbReference type="HAMAP" id="MF_00002">
    <property type="entry name" value="Asp_carb_tr_reg"/>
    <property type="match status" value="1"/>
</dbReference>
<dbReference type="InterPro" id="IPR020545">
    <property type="entry name" value="Asp_carbamoyltransf_reg_N"/>
</dbReference>
<dbReference type="InterPro" id="IPR002801">
    <property type="entry name" value="Asp_carbamoylTrfase_reg"/>
</dbReference>
<dbReference type="InterPro" id="IPR020542">
    <property type="entry name" value="Asp_carbamoyltrfase_reg_C"/>
</dbReference>
<dbReference type="InterPro" id="IPR036792">
    <property type="entry name" value="Asp_carbatrfase_reg_C_sf"/>
</dbReference>
<dbReference type="InterPro" id="IPR036793">
    <property type="entry name" value="Asp_carbatrfase_reg_N_sf"/>
</dbReference>
<dbReference type="NCBIfam" id="TIGR00240">
    <property type="entry name" value="ATCase_reg"/>
    <property type="match status" value="1"/>
</dbReference>
<dbReference type="PANTHER" id="PTHR35805">
    <property type="entry name" value="ASPARTATE CARBAMOYLTRANSFERASE REGULATORY CHAIN"/>
    <property type="match status" value="1"/>
</dbReference>
<dbReference type="PANTHER" id="PTHR35805:SF1">
    <property type="entry name" value="ASPARTATE CARBAMOYLTRANSFERASE REGULATORY CHAIN"/>
    <property type="match status" value="1"/>
</dbReference>
<dbReference type="Pfam" id="PF01948">
    <property type="entry name" value="PyrI"/>
    <property type="match status" value="1"/>
</dbReference>
<dbReference type="Pfam" id="PF02748">
    <property type="entry name" value="PyrI_C"/>
    <property type="match status" value="1"/>
</dbReference>
<dbReference type="SUPFAM" id="SSF57825">
    <property type="entry name" value="Aspartate carbamoyltransferase, Regulatory-chain, C-terminal domain"/>
    <property type="match status" value="1"/>
</dbReference>
<dbReference type="SUPFAM" id="SSF54893">
    <property type="entry name" value="Aspartate carbamoyltransferase, Regulatory-chain, N-terminal domain"/>
    <property type="match status" value="1"/>
</dbReference>
<sequence length="151" mass="16938">MPELKVEVIPEGTVIDHIPAGKWLKVIEILGLTKPNGGTLLIASNVPSKKLGRKDIVKVEGRYLSEEEVNKIALIAPDATVNIVRDYKIVEKFKVSIPDEIVGILTCPNPNCVSNHEYVRPRFKVESREPLKLRCHYCERTIEGEEIIGNL</sequence>
<accession>C5A2H2</accession>